<protein>
    <recommendedName>
        <fullName>High osmolarity signaling protein SHO1</fullName>
    </recommendedName>
    <alternativeName>
        <fullName>Osmosensor SHO1</fullName>
    </alternativeName>
    <alternativeName>
        <fullName>Suppressor of SUA8-1 mutation</fullName>
    </alternativeName>
    <alternativeName>
        <fullName>Synthetic high osmolarity-sensitive protein 1</fullName>
    </alternativeName>
</protein>
<evidence type="ECO:0000250" key="1"/>
<evidence type="ECO:0000250" key="2">
    <source>
        <dbReference type="UniProtKB" id="P40073"/>
    </source>
</evidence>
<evidence type="ECO:0000255" key="3"/>
<evidence type="ECO:0000255" key="4">
    <source>
        <dbReference type="PROSITE-ProRule" id="PRU00192"/>
    </source>
</evidence>
<evidence type="ECO:0000256" key="5">
    <source>
        <dbReference type="SAM" id="MobiDB-lite"/>
    </source>
</evidence>
<evidence type="ECO:0000305" key="6"/>
<accession>B3LRN4</accession>
<proteinExistence type="inferred from homology"/>
<sequence length="367" mass="41098">MSISSKIRPTPRKPSRMATDHSFKMKNFYADPFAISSISLAIVSWVIAIGGSISSASTNESFPRFTWWGIVYQFLIICSLMLFYCFDLVDHYRIFITTSIAVAFVYNTNSATNLVYADGPKKAAASAGVILLSIINLVWILYYGGDNASPTNRWIDSFSIKGIRPSPLENSLHRARRRGNRNTTPYQNNVYNDAIRDSGYATQFDGYPQQQPSHTNYVSSTALAGFENTQPNTSEAVNLHLNTLQQRINSASNAKETNDNSNNQTNTNIGNTFDTDFSNGNTETTMGDTLGLYSDIGDDNFIYKAKALYPYDADDDDAYEISFEQNEILQVSDIEGRWWKARRANGETGIIPSNYVQLIDGPEEMHR</sequence>
<gene>
    <name type="primary">SHO1</name>
    <name type="synonym">SSU81</name>
    <name type="ORF">SCRG_04594</name>
</gene>
<feature type="chain" id="PRO_0000410408" description="High osmolarity signaling protein SHO1">
    <location>
        <begin position="1"/>
        <end position="367"/>
    </location>
</feature>
<feature type="topological domain" description="Cytoplasmic" evidence="3">
    <location>
        <begin position="1"/>
        <end position="32"/>
    </location>
</feature>
<feature type="transmembrane region" description="Helical" evidence="3">
    <location>
        <begin position="33"/>
        <end position="53"/>
    </location>
</feature>
<feature type="topological domain" description="Extracellular" evidence="3">
    <location>
        <begin position="54"/>
        <end position="65"/>
    </location>
</feature>
<feature type="transmembrane region" description="Helical" evidence="3">
    <location>
        <begin position="66"/>
        <end position="86"/>
    </location>
</feature>
<feature type="topological domain" description="Cytoplasmic" evidence="3">
    <location>
        <begin position="87"/>
        <end position="93"/>
    </location>
</feature>
<feature type="transmembrane region" description="Helical" evidence="3">
    <location>
        <begin position="94"/>
        <end position="114"/>
    </location>
</feature>
<feature type="topological domain" description="Extracellular" evidence="3">
    <location>
        <begin position="115"/>
        <end position="122"/>
    </location>
</feature>
<feature type="transmembrane region" description="Helical" evidence="3">
    <location>
        <begin position="123"/>
        <end position="143"/>
    </location>
</feature>
<feature type="topological domain" description="Cytoplasmic" evidence="3">
    <location>
        <begin position="144"/>
        <end position="367"/>
    </location>
</feature>
<feature type="domain" description="SH3" evidence="4">
    <location>
        <begin position="300"/>
        <end position="361"/>
    </location>
</feature>
<feature type="region of interest" description="Disordered" evidence="5">
    <location>
        <begin position="252"/>
        <end position="276"/>
    </location>
</feature>
<feature type="compositionally biased region" description="Low complexity" evidence="5">
    <location>
        <begin position="259"/>
        <end position="272"/>
    </location>
</feature>
<feature type="modified residue" description="Phosphoserine" evidence="2">
    <location>
        <position position="166"/>
    </location>
</feature>
<feature type="glycosylation site" description="N-linked (GlcNAc...) asparagine" evidence="3">
    <location>
        <position position="59"/>
    </location>
</feature>
<reference key="1">
    <citation type="submission" date="2005-03" db="EMBL/GenBank/DDBJ databases">
        <title>Annotation of the Saccharomyces cerevisiae RM11-1a genome.</title>
        <authorList>
            <consortium name="The Broad Institute Genome Sequencing Platform"/>
            <person name="Birren B.W."/>
            <person name="Lander E.S."/>
            <person name="Galagan J.E."/>
            <person name="Nusbaum C."/>
            <person name="Devon K."/>
            <person name="Cuomo C."/>
            <person name="Jaffe D.B."/>
            <person name="Butler J."/>
            <person name="Alvarez P."/>
            <person name="Gnerre S."/>
            <person name="Grabherr M."/>
            <person name="Kleber M."/>
            <person name="Mauceli E.W."/>
            <person name="Brockman W."/>
            <person name="MacCallum I.A."/>
            <person name="Rounsley S."/>
            <person name="Young S.K."/>
            <person name="LaButti K."/>
            <person name="Pushparaj V."/>
            <person name="DeCaprio D."/>
            <person name="Crawford M."/>
            <person name="Koehrsen M."/>
            <person name="Engels R."/>
            <person name="Montgomery P."/>
            <person name="Pearson M."/>
            <person name="Howarth C."/>
            <person name="Larson L."/>
            <person name="Luoma S."/>
            <person name="White J."/>
            <person name="O'Leary S."/>
            <person name="Kodira C.D."/>
            <person name="Zeng Q."/>
            <person name="Yandava C."/>
            <person name="Alvarado L."/>
            <person name="Pratt S."/>
            <person name="Kruglyak L."/>
        </authorList>
    </citation>
    <scope>NUCLEOTIDE SEQUENCE [LARGE SCALE GENOMIC DNA]</scope>
    <source>
        <strain>RM11-1a</strain>
    </source>
</reference>
<keyword id="KW-1003">Cell membrane</keyword>
<keyword id="KW-0966">Cell projection</keyword>
<keyword id="KW-0325">Glycoprotein</keyword>
<keyword id="KW-0472">Membrane</keyword>
<keyword id="KW-0597">Phosphoprotein</keyword>
<keyword id="KW-0728">SH3 domain</keyword>
<keyword id="KW-0346">Stress response</keyword>
<keyword id="KW-0812">Transmembrane</keyword>
<keyword id="KW-1133">Transmembrane helix</keyword>
<name>SHO1_YEAS1</name>
<organism>
    <name type="scientific">Saccharomyces cerevisiae (strain RM11-1a)</name>
    <name type="common">Baker's yeast</name>
    <dbReference type="NCBI Taxonomy" id="285006"/>
    <lineage>
        <taxon>Eukaryota</taxon>
        <taxon>Fungi</taxon>
        <taxon>Dikarya</taxon>
        <taxon>Ascomycota</taxon>
        <taxon>Saccharomycotina</taxon>
        <taxon>Saccharomycetes</taxon>
        <taxon>Saccharomycetales</taxon>
        <taxon>Saccharomycetaceae</taxon>
        <taxon>Saccharomyces</taxon>
    </lineage>
</organism>
<comment type="function">
    <text evidence="1">Plasma membrane osmosensor that activates the high osmolarity glycerol (HOG) MAPK signaling pathway in response to high osmolarity. Detects changes in external osmolarity and activates PBS2 through the stimulation of STE11 and targets PBS2 to the plasma membrane. PBS2 activation leads to changes in glycerol production that helps to balance the intracellular and external osmotic pressures. Activates also HOG1 in response to heat stress and mediates resistance to oxidative stress. Involved in the regulation of the mating pathway. May be a receptor that feeds into the pseudohyphal growth pathway (By similarity).</text>
</comment>
<comment type="subunit">
    <text evidence="1">Forms homooligomers (By similarity). Interacts (via the SH3 domain) with PBS2. Interacts with FUS1, STE11, STE50 and RNA polymerase II (By similarity).</text>
</comment>
<comment type="subcellular location">
    <subcellularLocation>
        <location evidence="1">Cell membrane</location>
        <topology evidence="1">Multi-pass membrane protein</topology>
    </subcellularLocation>
    <subcellularLocation>
        <location evidence="1">Bud</location>
    </subcellularLocation>
    <subcellularLocation>
        <location evidence="1">Bud neck</location>
    </subcellularLocation>
    <subcellularLocation>
        <location evidence="1">Cell projection</location>
    </subcellularLocation>
    <text evidence="1">Localizes at the tip of the mating projection during conjugation.</text>
</comment>
<comment type="similarity">
    <text evidence="6">Belongs to the SHO1 family.</text>
</comment>
<dbReference type="EMBL" id="CH408052">
    <property type="protein sequence ID" value="EDV08947.1"/>
    <property type="molecule type" value="Genomic_DNA"/>
</dbReference>
<dbReference type="SMR" id="B3LRN4"/>
<dbReference type="GlyCosmos" id="B3LRN4">
    <property type="glycosylation" value="1 site, No reported glycans"/>
</dbReference>
<dbReference type="HOGENOM" id="CLU_043316_0_0_1"/>
<dbReference type="OrthoDB" id="3664at4893"/>
<dbReference type="Proteomes" id="UP000008335">
    <property type="component" value="Unassembled WGS sequence"/>
</dbReference>
<dbReference type="GO" id="GO:0042995">
    <property type="term" value="C:cell projection"/>
    <property type="evidence" value="ECO:0007669"/>
    <property type="project" value="UniProtKB-SubCell"/>
</dbReference>
<dbReference type="GO" id="GO:0005935">
    <property type="term" value="C:cellular bud neck"/>
    <property type="evidence" value="ECO:0007669"/>
    <property type="project" value="UniProtKB-SubCell"/>
</dbReference>
<dbReference type="GO" id="GO:0005886">
    <property type="term" value="C:plasma membrane"/>
    <property type="evidence" value="ECO:0007669"/>
    <property type="project" value="UniProtKB-SubCell"/>
</dbReference>
<dbReference type="GO" id="GO:0030833">
    <property type="term" value="P:regulation of actin filament polymerization"/>
    <property type="evidence" value="ECO:0007669"/>
    <property type="project" value="TreeGrafter"/>
</dbReference>
<dbReference type="CDD" id="cd11855">
    <property type="entry name" value="SH3_Sho1p"/>
    <property type="match status" value="1"/>
</dbReference>
<dbReference type="FunFam" id="2.30.30.40:FF:000213">
    <property type="entry name" value="High osmolarity signaling protein SHO1"/>
    <property type="match status" value="1"/>
</dbReference>
<dbReference type="Gene3D" id="2.30.30.40">
    <property type="entry name" value="SH3 Domains"/>
    <property type="match status" value="1"/>
</dbReference>
<dbReference type="InterPro" id="IPR036028">
    <property type="entry name" value="SH3-like_dom_sf"/>
</dbReference>
<dbReference type="InterPro" id="IPR001452">
    <property type="entry name" value="SH3_domain"/>
</dbReference>
<dbReference type="InterPro" id="IPR035522">
    <property type="entry name" value="Sho1_SH3"/>
</dbReference>
<dbReference type="PANTHER" id="PTHR15735">
    <property type="entry name" value="FCH AND DOUBLE SH3 DOMAINS PROTEIN"/>
    <property type="match status" value="1"/>
</dbReference>
<dbReference type="PANTHER" id="PTHR15735:SF20">
    <property type="entry name" value="HIGH OSMOLARITY SIGNALING PROTEIN SHO1"/>
    <property type="match status" value="1"/>
</dbReference>
<dbReference type="Pfam" id="PF00018">
    <property type="entry name" value="SH3_1"/>
    <property type="match status" value="1"/>
</dbReference>
<dbReference type="PRINTS" id="PR00452">
    <property type="entry name" value="SH3DOMAIN"/>
</dbReference>
<dbReference type="SMART" id="SM00326">
    <property type="entry name" value="SH3"/>
    <property type="match status" value="1"/>
</dbReference>
<dbReference type="SUPFAM" id="SSF50044">
    <property type="entry name" value="SH3-domain"/>
    <property type="match status" value="1"/>
</dbReference>
<dbReference type="PROSITE" id="PS50002">
    <property type="entry name" value="SH3"/>
    <property type="match status" value="1"/>
</dbReference>